<comment type="function">
    <text evidence="3 4">Involved in the initial step of iron uptake by binding iron chelating siderophores, thereby allowing extraction of iron from the environment (PubMed:28137795, PubMed:33350053). Probably involved in the transport of siderophores, including host catecholamines such as dopamine (PubMed:28137795, PubMed:33350053).</text>
</comment>
<comment type="subcellular location">
    <subcellularLocation>
        <location evidence="2">Cell outer membrane</location>
        <topology evidence="2">Multi-pass membrane protein</topology>
    </subcellularLocation>
</comment>
<comment type="disruption phenotype">
    <text evidence="3 4">Deletion decreases sensitivity to siderophore-beta-lactam drug conjugates; phenotype is complemented by ectopic expression of PiuA or PirA, or by heterologous expression of probable siderophore receptor PirA from A.baumannii (PubMed:28137795). In a pvdF and pchA double mutant background, in iron restricted culture, growth inhibited by 60% in the presence of dopamine and delayed in the presence of other catecholamines such as epinephrine; growth is inhibited further, but not completely abolished, when pirA is also deleted (PubMed:33350053).</text>
</comment>
<comment type="similarity">
    <text evidence="6">Belongs to the TonB-dependent receptor family.</text>
</comment>
<reference evidence="9" key="1">
    <citation type="journal article" date="2000" name="Nature">
        <title>Complete genome sequence of Pseudomonas aeruginosa PAO1, an opportunistic pathogen.</title>
        <authorList>
            <person name="Stover C.K."/>
            <person name="Pham X.-Q.T."/>
            <person name="Erwin A.L."/>
            <person name="Mizoguchi S.D."/>
            <person name="Warrener P."/>
            <person name="Hickey M.J."/>
            <person name="Brinkman F.S.L."/>
            <person name="Hufnagle W.O."/>
            <person name="Kowalik D.J."/>
            <person name="Lagrou M."/>
            <person name="Garber R.L."/>
            <person name="Goltry L."/>
            <person name="Tolentino E."/>
            <person name="Westbrock-Wadman S."/>
            <person name="Yuan Y."/>
            <person name="Brody L.L."/>
            <person name="Coulter S.N."/>
            <person name="Folger K.R."/>
            <person name="Kas A."/>
            <person name="Larbig K."/>
            <person name="Lim R.M."/>
            <person name="Smith K.A."/>
            <person name="Spencer D.H."/>
            <person name="Wong G.K.-S."/>
            <person name="Wu Z."/>
            <person name="Paulsen I.T."/>
            <person name="Reizer J."/>
            <person name="Saier M.H. Jr."/>
            <person name="Hancock R.E.W."/>
            <person name="Lory S."/>
            <person name="Olson M.V."/>
        </authorList>
    </citation>
    <scope>NUCLEOTIDE SEQUENCE [LARGE SCALE GENOMIC DNA]</scope>
    <source>
        <strain evidence="9">ATCC 15692 / DSM 22644 / CIP 104116 / JCM 14847 / LMG 12228 / 1C / PRS 101 / PAO1</strain>
    </source>
</reference>
<reference evidence="6" key="2">
    <citation type="journal article" date="2022" name="Environ. Microbiol.">
        <title>Opportunistic use of catecholamine neurotransmitters as siderophores to access iron by Pseudomonas aeruginosa.</title>
        <authorList>
            <person name="Perraud Q."/>
            <person name="Kuhn L."/>
            <person name="Fritsch S."/>
            <person name="Graulier G."/>
            <person name="Gasser V."/>
            <person name="Normant V."/>
            <person name="Hammann P."/>
            <person name="Schalk I.J."/>
        </authorList>
    </citation>
    <scope>FUNCTION</scope>
    <scope>DISRUPTION PHENOTYPE</scope>
</reference>
<reference evidence="10" key="3">
    <citation type="journal article" date="2017" name="Antimicrob. Agents Chemother.">
        <title>Structure and Function of the PiuA and PirA Siderophore-Drug Receptors from Pseudomonas aeruginosa and Acinetobacter baumannii.</title>
        <authorList>
            <person name="Moynie L."/>
            <person name="Luscher A."/>
            <person name="Rolo D."/>
            <person name="Pletzer D."/>
            <person name="Tortajada A."/>
            <person name="Weingart H."/>
            <person name="Braun Y."/>
            <person name="Page M.G."/>
            <person name="Naismith J.H."/>
            <person name="Kohler T."/>
        </authorList>
    </citation>
    <scope>X-RAY CRYSTALLOGRAPHY (1.90 ANGSTROMS) OF 37-753</scope>
    <scope>FUNCTION</scope>
    <scope>DISRUPTION PHENOTYPE</scope>
    <scope>DISULFIDE BOND</scope>
</reference>
<feature type="signal peptide" evidence="1">
    <location>
        <begin position="1"/>
        <end position="35"/>
    </location>
</feature>
<feature type="chain" id="PRO_5003459586" description="Probable TonB-dependent siderophore receptor PiuA" evidence="1">
    <location>
        <begin position="36"/>
        <end position="753"/>
    </location>
</feature>
<feature type="domain" description="TBDR plug" evidence="2">
    <location>
        <begin position="79"/>
        <end position="185"/>
    </location>
</feature>
<feature type="domain" description="TBDR beta-barrel" evidence="2">
    <location>
        <begin position="190"/>
        <end position="753"/>
    </location>
</feature>
<feature type="disulfide bond" evidence="3 10">
    <location>
        <begin position="420"/>
        <end position="430"/>
    </location>
</feature>
<feature type="helix" evidence="11">
    <location>
        <begin position="80"/>
        <end position="82"/>
    </location>
</feature>
<feature type="strand" evidence="11">
    <location>
        <begin position="83"/>
        <end position="85"/>
    </location>
</feature>
<feature type="strand" evidence="11">
    <location>
        <begin position="87"/>
        <end position="90"/>
    </location>
</feature>
<feature type="helix" evidence="11">
    <location>
        <begin position="92"/>
        <end position="97"/>
    </location>
</feature>
<feature type="helix" evidence="11">
    <location>
        <begin position="103"/>
        <end position="107"/>
    </location>
</feature>
<feature type="strand" evidence="11">
    <location>
        <begin position="110"/>
        <end position="116"/>
    </location>
</feature>
<feature type="strand" evidence="11">
    <location>
        <begin position="127"/>
        <end position="130"/>
    </location>
</feature>
<feature type="helix" evidence="11">
    <location>
        <begin position="136"/>
        <end position="138"/>
    </location>
</feature>
<feature type="strand" evidence="11">
    <location>
        <begin position="139"/>
        <end position="141"/>
    </location>
</feature>
<feature type="strand" evidence="11">
    <location>
        <begin position="157"/>
        <end position="163"/>
    </location>
</feature>
<feature type="strand" evidence="11">
    <location>
        <begin position="165"/>
        <end position="167"/>
    </location>
</feature>
<feature type="strand" evidence="11">
    <location>
        <begin position="179"/>
        <end position="184"/>
    </location>
</feature>
<feature type="strand" evidence="11">
    <location>
        <begin position="192"/>
        <end position="200"/>
    </location>
</feature>
<feature type="strand" evidence="11">
    <location>
        <begin position="205"/>
        <end position="215"/>
    </location>
</feature>
<feature type="turn" evidence="11">
    <location>
        <begin position="216"/>
        <end position="218"/>
    </location>
</feature>
<feature type="strand" evidence="11">
    <location>
        <begin position="219"/>
        <end position="231"/>
    </location>
</feature>
<feature type="strand" evidence="11">
    <location>
        <begin position="239"/>
        <end position="251"/>
    </location>
</feature>
<feature type="strand" evidence="11">
    <location>
        <begin position="255"/>
        <end position="270"/>
    </location>
</feature>
<feature type="strand" evidence="11">
    <location>
        <begin position="276"/>
        <end position="278"/>
    </location>
</feature>
<feature type="strand" evidence="11">
    <location>
        <begin position="284"/>
        <end position="287"/>
    </location>
</feature>
<feature type="turn" evidence="11">
    <location>
        <begin position="303"/>
        <end position="305"/>
    </location>
</feature>
<feature type="strand" evidence="11">
    <location>
        <begin position="307"/>
        <end position="324"/>
    </location>
</feature>
<feature type="strand" evidence="11">
    <location>
        <begin position="327"/>
        <end position="348"/>
    </location>
</feature>
<feature type="helix" evidence="11">
    <location>
        <begin position="354"/>
        <end position="356"/>
    </location>
</feature>
<feature type="strand" evidence="11">
    <location>
        <begin position="358"/>
        <end position="385"/>
    </location>
</feature>
<feature type="strand" evidence="11">
    <location>
        <begin position="388"/>
        <end position="405"/>
    </location>
</feature>
<feature type="strand" evidence="11">
    <location>
        <begin position="408"/>
        <end position="411"/>
    </location>
</feature>
<feature type="helix" evidence="11">
    <location>
        <begin position="422"/>
        <end position="426"/>
    </location>
</feature>
<feature type="strand" evidence="11">
    <location>
        <begin position="429"/>
        <end position="435"/>
    </location>
</feature>
<feature type="strand" evidence="11">
    <location>
        <begin position="445"/>
        <end position="448"/>
    </location>
</feature>
<feature type="strand" evidence="11">
    <location>
        <begin position="452"/>
        <end position="469"/>
    </location>
</feature>
<feature type="strand" evidence="11">
    <location>
        <begin position="471"/>
        <end position="493"/>
    </location>
</feature>
<feature type="strand" evidence="11">
    <location>
        <begin position="499"/>
        <end position="524"/>
    </location>
</feature>
<feature type="strand" evidence="11">
    <location>
        <begin position="527"/>
        <end position="537"/>
    </location>
</feature>
<feature type="strand" evidence="11">
    <location>
        <begin position="563"/>
        <end position="574"/>
    </location>
</feature>
<feature type="turn" evidence="11">
    <location>
        <begin position="575"/>
        <end position="578"/>
    </location>
</feature>
<feature type="strand" evidence="11">
    <location>
        <begin position="579"/>
        <end position="592"/>
    </location>
</feature>
<feature type="strand" evidence="11">
    <location>
        <begin position="607"/>
        <end position="642"/>
    </location>
</feature>
<feature type="helix" evidence="11">
    <location>
        <begin position="646"/>
        <end position="648"/>
    </location>
</feature>
<feature type="strand" evidence="11">
    <location>
        <begin position="658"/>
        <end position="670"/>
    </location>
</feature>
<feature type="strand" evidence="11">
    <location>
        <begin position="673"/>
        <end position="682"/>
    </location>
</feature>
<feature type="strand" evidence="11">
    <location>
        <begin position="685"/>
        <end position="688"/>
    </location>
</feature>
<feature type="strand" evidence="11">
    <location>
        <begin position="693"/>
        <end position="695"/>
    </location>
</feature>
<feature type="strand" evidence="11">
    <location>
        <begin position="698"/>
        <end position="710"/>
    </location>
</feature>
<feature type="strand" evidence="11">
    <location>
        <begin position="713"/>
        <end position="721"/>
    </location>
</feature>
<feature type="strand" evidence="11">
    <location>
        <begin position="728"/>
        <end position="731"/>
    </location>
</feature>
<feature type="strand" evidence="11">
    <location>
        <begin position="733"/>
        <end position="739"/>
    </location>
</feature>
<feature type="strand" evidence="11">
    <location>
        <begin position="744"/>
        <end position="753"/>
    </location>
</feature>
<proteinExistence type="evidence at protein level"/>
<keyword id="KW-0002">3D-structure</keyword>
<keyword id="KW-0998">Cell outer membrane</keyword>
<keyword id="KW-1015">Disulfide bond</keyword>
<keyword id="KW-0406">Ion transport</keyword>
<keyword id="KW-0408">Iron</keyword>
<keyword id="KW-0410">Iron transport</keyword>
<keyword id="KW-0472">Membrane</keyword>
<keyword id="KW-0626">Porin</keyword>
<keyword id="KW-0675">Receptor</keyword>
<keyword id="KW-1185">Reference proteome</keyword>
<keyword id="KW-0732">Signal</keyword>
<keyword id="KW-0798">TonB box</keyword>
<keyword id="KW-0812">Transmembrane</keyword>
<keyword id="KW-1134">Transmembrane beta strand</keyword>
<keyword id="KW-0813">Transport</keyword>
<dbReference type="EMBL" id="AE004091">
    <property type="protein sequence ID" value="AAG07902.1"/>
    <property type="molecule type" value="Genomic_DNA"/>
</dbReference>
<dbReference type="PIR" id="D83081">
    <property type="entry name" value="D83081"/>
</dbReference>
<dbReference type="RefSeq" id="NP_253204.1">
    <property type="nucleotide sequence ID" value="NC_002516.2"/>
</dbReference>
<dbReference type="RefSeq" id="WP_003112850.1">
    <property type="nucleotide sequence ID" value="NZ_QZGE01000004.1"/>
</dbReference>
<dbReference type="PDB" id="5FOK">
    <property type="method" value="X-ray"/>
    <property type="resolution" value="1.90 A"/>
    <property type="chains" value="A/B=37-753"/>
</dbReference>
<dbReference type="PDBsum" id="5FOK"/>
<dbReference type="SMR" id="G3XCY8"/>
<dbReference type="FunCoup" id="G3XCY8">
    <property type="interactions" value="182"/>
</dbReference>
<dbReference type="STRING" id="208964.PA4514"/>
<dbReference type="PaxDb" id="208964-PA4514"/>
<dbReference type="GeneID" id="881112"/>
<dbReference type="KEGG" id="pae:PA4514"/>
<dbReference type="PATRIC" id="fig|208964.12.peg.4724"/>
<dbReference type="PseudoCAP" id="PA4514"/>
<dbReference type="HOGENOM" id="CLU_008287_9_1_6"/>
<dbReference type="InParanoid" id="G3XCY8"/>
<dbReference type="OrthoDB" id="9790771at2"/>
<dbReference type="PhylomeDB" id="G3XCY8"/>
<dbReference type="BioCyc" id="PAER208964:G1FZ6-4603-MONOMER"/>
<dbReference type="Proteomes" id="UP000002438">
    <property type="component" value="Chromosome"/>
</dbReference>
<dbReference type="GO" id="GO:0009279">
    <property type="term" value="C:cell outer membrane"/>
    <property type="evidence" value="ECO:0000318"/>
    <property type="project" value="GO_Central"/>
</dbReference>
<dbReference type="GO" id="GO:0046930">
    <property type="term" value="C:pore complex"/>
    <property type="evidence" value="ECO:0007669"/>
    <property type="project" value="UniProtKB-KW"/>
</dbReference>
<dbReference type="GO" id="GO:0015288">
    <property type="term" value="F:porin activity"/>
    <property type="evidence" value="ECO:0007669"/>
    <property type="project" value="UniProtKB-KW"/>
</dbReference>
<dbReference type="GO" id="GO:0015344">
    <property type="term" value="F:siderophore uptake transmembrane transporter activity"/>
    <property type="evidence" value="ECO:0000318"/>
    <property type="project" value="GO_Central"/>
</dbReference>
<dbReference type="GO" id="GO:0038023">
    <property type="term" value="F:signaling receptor activity"/>
    <property type="evidence" value="ECO:0007669"/>
    <property type="project" value="InterPro"/>
</dbReference>
<dbReference type="GO" id="GO:0006826">
    <property type="term" value="P:iron ion transport"/>
    <property type="evidence" value="ECO:0000315"/>
    <property type="project" value="UniProtKB"/>
</dbReference>
<dbReference type="GO" id="GO:0015891">
    <property type="term" value="P:siderophore transport"/>
    <property type="evidence" value="ECO:0000315"/>
    <property type="project" value="UniProtKB"/>
</dbReference>
<dbReference type="GO" id="GO:0033214">
    <property type="term" value="P:siderophore-dependent iron import into cell"/>
    <property type="evidence" value="ECO:0000318"/>
    <property type="project" value="GO_Central"/>
</dbReference>
<dbReference type="CDD" id="cd01347">
    <property type="entry name" value="ligand_gated_channel"/>
    <property type="match status" value="1"/>
</dbReference>
<dbReference type="FunFam" id="2.170.130.10:FF:000001">
    <property type="entry name" value="Catecholate siderophore TonB-dependent receptor"/>
    <property type="match status" value="1"/>
</dbReference>
<dbReference type="Gene3D" id="2.40.170.20">
    <property type="entry name" value="TonB-dependent receptor, beta-barrel domain"/>
    <property type="match status" value="1"/>
</dbReference>
<dbReference type="Gene3D" id="2.170.130.10">
    <property type="entry name" value="TonB-dependent receptor, plug domain"/>
    <property type="match status" value="1"/>
</dbReference>
<dbReference type="InterPro" id="IPR012910">
    <property type="entry name" value="Plug_dom"/>
</dbReference>
<dbReference type="InterPro" id="IPR037066">
    <property type="entry name" value="Plug_dom_sf"/>
</dbReference>
<dbReference type="InterPro" id="IPR039426">
    <property type="entry name" value="TonB-dep_rcpt-like"/>
</dbReference>
<dbReference type="InterPro" id="IPR000531">
    <property type="entry name" value="TonB-dep_rcpt_b-brl"/>
</dbReference>
<dbReference type="InterPro" id="IPR036942">
    <property type="entry name" value="TonB_rcpt_b-brl_sf"/>
</dbReference>
<dbReference type="InterPro" id="IPR010105">
    <property type="entry name" value="TonB_sidphr_rcpt"/>
</dbReference>
<dbReference type="NCBIfam" id="TIGR01783">
    <property type="entry name" value="TonB-siderophor"/>
    <property type="match status" value="1"/>
</dbReference>
<dbReference type="PANTHER" id="PTHR32552:SF89">
    <property type="entry name" value="CATECHOLATE SIDEROPHORE RECEPTOR FIU"/>
    <property type="match status" value="1"/>
</dbReference>
<dbReference type="PANTHER" id="PTHR32552">
    <property type="entry name" value="FERRICHROME IRON RECEPTOR-RELATED"/>
    <property type="match status" value="1"/>
</dbReference>
<dbReference type="Pfam" id="PF07715">
    <property type="entry name" value="Plug"/>
    <property type="match status" value="1"/>
</dbReference>
<dbReference type="Pfam" id="PF00593">
    <property type="entry name" value="TonB_dep_Rec_b-barrel"/>
    <property type="match status" value="1"/>
</dbReference>
<dbReference type="SUPFAM" id="SSF56935">
    <property type="entry name" value="Porins"/>
    <property type="match status" value="1"/>
</dbReference>
<dbReference type="PROSITE" id="PS52016">
    <property type="entry name" value="TONB_DEPENDENT_REC_3"/>
    <property type="match status" value="1"/>
</dbReference>
<name>PIUA_PSEAE</name>
<evidence type="ECO:0000255" key="1"/>
<evidence type="ECO:0000255" key="2">
    <source>
        <dbReference type="PROSITE-ProRule" id="PRU01360"/>
    </source>
</evidence>
<evidence type="ECO:0000269" key="3">
    <source>
    </source>
</evidence>
<evidence type="ECO:0000269" key="4">
    <source>
    </source>
</evidence>
<evidence type="ECO:0000303" key="5">
    <source>
    </source>
</evidence>
<evidence type="ECO:0000305" key="6"/>
<evidence type="ECO:0000305" key="7">
    <source>
    </source>
</evidence>
<evidence type="ECO:0000312" key="8">
    <source>
        <dbReference type="EMBL" id="AAG07902.1"/>
    </source>
</evidence>
<evidence type="ECO:0000312" key="9">
    <source>
        <dbReference type="Proteomes" id="UP000002438"/>
    </source>
</evidence>
<evidence type="ECO:0007744" key="10">
    <source>
        <dbReference type="PDB" id="5FOK"/>
    </source>
</evidence>
<evidence type="ECO:0007829" key="11">
    <source>
        <dbReference type="PDB" id="5FOK"/>
    </source>
</evidence>
<gene>
    <name evidence="5" type="primary">piuA</name>
    <name evidence="8" type="ordered locus">PA4514</name>
</gene>
<accession>G3XCY8</accession>
<protein>
    <recommendedName>
        <fullName evidence="7">Probable TonB-dependent siderophore receptor PiuA</fullName>
    </recommendedName>
</protein>
<sequence length="753" mass="82337">MSRQSTDTAVSSQRLLASAIGVAITAIAAPQAAQADEAGQKKTDKDRVLSLDAATIVGEQQDETTYNVDRSASKKYTAPLLDTPKTVTVIPQQVIKDTGALTLADALRTTPGITFGAGEGGNPAGDRPFIRGFNAESDTFLDGMRDVASQTREVFNVEQIEVSKGPGSAYTGAGSTGGSLNLISKTAKQDNFTDAGFTWGSDQTRRTTLDVNRMIGDNAAFRLNLMKHDAHVAGRDEVSVSRWGVAPTVTFGFDTPTRATLSYYHLSTDDMPDYGLPLTNVNRSKANPSKPASVDRDNFYGLKDRDYRKSTTDSGTFRIEHDLNDNLTLSNSTRLVRTTLDYIVSNPDDSRGNVANGYVYRSAKSRNSTSKGWVNQTDLKANFETGFIKHTLVTGLEFSYEDVHNRPYAITSGGGAGNTCNARLLASGDCTSLNRPTPGDNWTGSITDGLAYTDTDTKTSAAYVFDTLKLSEQWELNLGLRYDDFDTKSSGYQTAGRNGPAGYFKRENNSHFWNYQTGLVYKPAPNGSIYLAWSTSSNPTGETGGEGQADISVGNNGLDPERNRNLELGTKWAFFDDALSLNAALFRTDKTNARVASPDVSTLQVLDGEQRVQGVELGFNGKLTEKWKVFGGYTYLDSEIRKSTVKSDEGNKMPQTAQNNFTLWTTYDLLQNFTIGGGTTYVDKQYGNTANSTYIPSYWRYDAMASYKVSKNVDLQLNVQNLTDKRYFDQVYSTHMAHVAPGRTALLGVNFHF</sequence>
<organism evidence="9">
    <name type="scientific">Pseudomonas aeruginosa (strain ATCC 15692 / DSM 22644 / CIP 104116 / JCM 14847 / LMG 12228 / 1C / PRS 101 / PAO1)</name>
    <dbReference type="NCBI Taxonomy" id="208964"/>
    <lineage>
        <taxon>Bacteria</taxon>
        <taxon>Pseudomonadati</taxon>
        <taxon>Pseudomonadota</taxon>
        <taxon>Gammaproteobacteria</taxon>
        <taxon>Pseudomonadales</taxon>
        <taxon>Pseudomonadaceae</taxon>
        <taxon>Pseudomonas</taxon>
    </lineage>
</organism>